<gene>
    <name type="primary">gtf2h2</name>
    <name type="synonym">tfiih2</name>
    <name type="ORF">DDB_G0272362</name>
</gene>
<proteinExistence type="inferred from homology"/>
<feature type="chain" id="PRO_0000327567" description="General transcription factor IIH subunit 2">
    <location>
        <begin position="1"/>
        <end position="461"/>
    </location>
</feature>
<feature type="domain" description="VWFA" evidence="3">
    <location>
        <begin position="98"/>
        <end position="275"/>
    </location>
</feature>
<feature type="zinc finger region" description="C4-type">
    <location>
        <begin position="315"/>
        <end position="332"/>
    </location>
</feature>
<feature type="region of interest" description="Disordered" evidence="4">
    <location>
        <begin position="1"/>
        <end position="37"/>
    </location>
</feature>
<feature type="region of interest" description="Disordered" evidence="4">
    <location>
        <begin position="61"/>
        <end position="83"/>
    </location>
</feature>
<feature type="region of interest" description="Disordered" evidence="4">
    <location>
        <begin position="423"/>
        <end position="461"/>
    </location>
</feature>
<feature type="region of interest" description="13 X 2 tandem repeat of N-[GE]">
    <location>
        <begin position="434"/>
        <end position="459"/>
    </location>
</feature>
<feature type="compositionally biased region" description="Polar residues" evidence="4">
    <location>
        <begin position="1"/>
        <end position="13"/>
    </location>
</feature>
<feature type="compositionally biased region" description="Basic and acidic residues" evidence="4">
    <location>
        <begin position="61"/>
        <end position="71"/>
    </location>
</feature>
<feature type="compositionally biased region" description="Low complexity" evidence="4">
    <location>
        <begin position="423"/>
        <end position="447"/>
    </location>
</feature>
<feature type="compositionally biased region" description="Gly residues" evidence="4">
    <location>
        <begin position="448"/>
        <end position="461"/>
    </location>
</feature>
<name>TF2H2_DICDI</name>
<dbReference type="EMBL" id="AAFI02000008">
    <property type="protein sequence ID" value="EAL71333.1"/>
    <property type="molecule type" value="Genomic_DNA"/>
</dbReference>
<dbReference type="RefSeq" id="XP_645146.1">
    <property type="nucleotide sequence ID" value="XM_640054.1"/>
</dbReference>
<dbReference type="SMR" id="Q86KZ2"/>
<dbReference type="FunCoup" id="Q86KZ2">
    <property type="interactions" value="464"/>
</dbReference>
<dbReference type="STRING" id="44689.Q86KZ2"/>
<dbReference type="GlyGen" id="Q86KZ2">
    <property type="glycosylation" value="1 site"/>
</dbReference>
<dbReference type="PaxDb" id="44689-DDB0231032"/>
<dbReference type="EnsemblProtists" id="EAL71333">
    <property type="protein sequence ID" value="EAL71333"/>
    <property type="gene ID" value="DDB_G0272362"/>
</dbReference>
<dbReference type="GeneID" id="8618316"/>
<dbReference type="KEGG" id="ddi:DDB_G0272362"/>
<dbReference type="dictyBase" id="DDB_G0272362">
    <property type="gene designation" value="gtf2h2"/>
</dbReference>
<dbReference type="VEuPathDB" id="AmoebaDB:DDB_G0272362"/>
<dbReference type="eggNOG" id="KOG2807">
    <property type="taxonomic scope" value="Eukaryota"/>
</dbReference>
<dbReference type="HOGENOM" id="CLU_028556_1_2_1"/>
<dbReference type="InParanoid" id="Q86KZ2"/>
<dbReference type="OMA" id="INWVEVP"/>
<dbReference type="PhylomeDB" id="Q86KZ2"/>
<dbReference type="Reactome" id="R-DDI-113418">
    <property type="pathway name" value="Formation of the Early Elongation Complex"/>
</dbReference>
<dbReference type="Reactome" id="R-DDI-5696395">
    <property type="pathway name" value="Formation of Incision Complex in GG-NER"/>
</dbReference>
<dbReference type="Reactome" id="R-DDI-674695">
    <property type="pathway name" value="RNA Polymerase II Pre-transcription Events"/>
</dbReference>
<dbReference type="Reactome" id="R-DDI-6781823">
    <property type="pathway name" value="Formation of TC-NER Pre-Incision Complex"/>
</dbReference>
<dbReference type="Reactome" id="R-DDI-6782135">
    <property type="pathway name" value="Dual incision in TC-NER"/>
</dbReference>
<dbReference type="Reactome" id="R-DDI-6782210">
    <property type="pathway name" value="Gap-filling DNA repair synthesis and ligation in TC-NER"/>
</dbReference>
<dbReference type="Reactome" id="R-DDI-6796648">
    <property type="pathway name" value="TP53 Regulates Transcription of DNA Repair Genes"/>
</dbReference>
<dbReference type="Reactome" id="R-DDI-72086">
    <property type="pathway name" value="mRNA Capping"/>
</dbReference>
<dbReference type="Reactome" id="R-DDI-73772">
    <property type="pathway name" value="RNA Polymerase I Promoter Escape"/>
</dbReference>
<dbReference type="Reactome" id="R-DDI-73776">
    <property type="pathway name" value="RNA Polymerase II Promoter Escape"/>
</dbReference>
<dbReference type="Reactome" id="R-DDI-73779">
    <property type="pathway name" value="RNA Polymerase II Transcription Pre-Initiation And Promoter Opening"/>
</dbReference>
<dbReference type="Reactome" id="R-DDI-75953">
    <property type="pathway name" value="RNA Polymerase II Transcription Initiation"/>
</dbReference>
<dbReference type="Reactome" id="R-DDI-76042">
    <property type="pathway name" value="RNA Polymerase II Transcription Initiation And Promoter Clearance"/>
</dbReference>
<dbReference type="Reactome" id="R-DDI-77075">
    <property type="pathway name" value="RNA Pol II CTD phosphorylation and interaction with CE"/>
</dbReference>
<dbReference type="PRO" id="PR:Q86KZ2"/>
<dbReference type="Proteomes" id="UP000002195">
    <property type="component" value="Chromosome 2"/>
</dbReference>
<dbReference type="GO" id="GO:0000439">
    <property type="term" value="C:transcription factor TFIIH core complex"/>
    <property type="evidence" value="ECO:0007669"/>
    <property type="project" value="InterPro"/>
</dbReference>
<dbReference type="GO" id="GO:0005675">
    <property type="term" value="C:transcription factor TFIIH holo complex"/>
    <property type="evidence" value="ECO:0000250"/>
    <property type="project" value="dictyBase"/>
</dbReference>
<dbReference type="GO" id="GO:0008270">
    <property type="term" value="F:zinc ion binding"/>
    <property type="evidence" value="ECO:0007669"/>
    <property type="project" value="UniProtKB-KW"/>
</dbReference>
<dbReference type="GO" id="GO:0006289">
    <property type="term" value="P:nucleotide-excision repair"/>
    <property type="evidence" value="ECO:0000250"/>
    <property type="project" value="dictyBase"/>
</dbReference>
<dbReference type="GO" id="GO:0006357">
    <property type="term" value="P:regulation of transcription by RNA polymerase II"/>
    <property type="evidence" value="ECO:0000318"/>
    <property type="project" value="GO_Central"/>
</dbReference>
<dbReference type="GO" id="GO:0006366">
    <property type="term" value="P:transcription by RNA polymerase II"/>
    <property type="evidence" value="ECO:0000250"/>
    <property type="project" value="dictyBase"/>
</dbReference>
<dbReference type="CDD" id="cd01453">
    <property type="entry name" value="vWA_transcription_factor_IIH_type"/>
    <property type="match status" value="1"/>
</dbReference>
<dbReference type="FunFam" id="3.30.40.10:FF:000449">
    <property type="entry name" value="General transcription factor IIH subunit"/>
    <property type="match status" value="1"/>
</dbReference>
<dbReference type="FunFam" id="3.40.50.410:FF:000015">
    <property type="entry name" value="General transcription factor IIH subunit 2"/>
    <property type="match status" value="1"/>
</dbReference>
<dbReference type="Gene3D" id="3.40.50.410">
    <property type="entry name" value="von Willebrand factor, type A domain"/>
    <property type="match status" value="1"/>
</dbReference>
<dbReference type="Gene3D" id="3.30.40.10">
    <property type="entry name" value="Zinc/RING finger domain, C3HC4 (zinc finger)"/>
    <property type="match status" value="1"/>
</dbReference>
<dbReference type="InterPro" id="IPR046349">
    <property type="entry name" value="C1-like_sf"/>
</dbReference>
<dbReference type="InterPro" id="IPR007198">
    <property type="entry name" value="Ssl1-like"/>
</dbReference>
<dbReference type="InterPro" id="IPR004595">
    <property type="entry name" value="TFIIH_C1-like_dom"/>
</dbReference>
<dbReference type="InterPro" id="IPR012170">
    <property type="entry name" value="TFIIH_SSL1/p44"/>
</dbReference>
<dbReference type="InterPro" id="IPR002035">
    <property type="entry name" value="VWF_A"/>
</dbReference>
<dbReference type="InterPro" id="IPR036465">
    <property type="entry name" value="vWFA_dom_sf"/>
</dbReference>
<dbReference type="InterPro" id="IPR013087">
    <property type="entry name" value="Znf_C2H2_type"/>
</dbReference>
<dbReference type="InterPro" id="IPR013083">
    <property type="entry name" value="Znf_RING/FYVE/PHD"/>
</dbReference>
<dbReference type="NCBIfam" id="TIGR00622">
    <property type="entry name" value="ssl1"/>
    <property type="match status" value="1"/>
</dbReference>
<dbReference type="PANTHER" id="PTHR12695">
    <property type="entry name" value="GENERAL TRANSCRIPTION FACTOR IIH SUBUNIT 2"/>
    <property type="match status" value="1"/>
</dbReference>
<dbReference type="PANTHER" id="PTHR12695:SF2">
    <property type="entry name" value="GENERAL TRANSCRIPTION FACTOR IIH SUBUNIT 2-RELATED"/>
    <property type="match status" value="1"/>
</dbReference>
<dbReference type="Pfam" id="PF07975">
    <property type="entry name" value="C1_4"/>
    <property type="match status" value="1"/>
</dbReference>
<dbReference type="Pfam" id="PF04056">
    <property type="entry name" value="Ssl1"/>
    <property type="match status" value="1"/>
</dbReference>
<dbReference type="PIRSF" id="PIRSF015919">
    <property type="entry name" value="TFIIH_SSL1"/>
    <property type="match status" value="1"/>
</dbReference>
<dbReference type="SMART" id="SM01047">
    <property type="entry name" value="C1_4"/>
    <property type="match status" value="1"/>
</dbReference>
<dbReference type="SMART" id="SM00327">
    <property type="entry name" value="VWA"/>
    <property type="match status" value="1"/>
</dbReference>
<dbReference type="SUPFAM" id="SSF57889">
    <property type="entry name" value="Cysteine-rich domain"/>
    <property type="match status" value="1"/>
</dbReference>
<dbReference type="SUPFAM" id="SSF53300">
    <property type="entry name" value="vWA-like"/>
    <property type="match status" value="1"/>
</dbReference>
<dbReference type="PROSITE" id="PS50234">
    <property type="entry name" value="VWFA"/>
    <property type="match status" value="1"/>
</dbReference>
<accession>Q86KZ2</accession>
<accession>Q55A38</accession>
<protein>
    <recommendedName>
        <fullName>General transcription factor IIH subunit 2</fullName>
    </recommendedName>
    <alternativeName>
        <fullName>TFIIH basal transcription factor complex subunit 2</fullName>
    </alternativeName>
</protein>
<reference key="1">
    <citation type="journal article" date="2002" name="Nature">
        <title>Sequence and analysis of chromosome 2 of Dictyostelium discoideum.</title>
        <authorList>
            <person name="Gloeckner G."/>
            <person name="Eichinger L."/>
            <person name="Szafranski K."/>
            <person name="Pachebat J.A."/>
            <person name="Bankier A.T."/>
            <person name="Dear P.H."/>
            <person name="Lehmann R."/>
            <person name="Baumgart C."/>
            <person name="Parra G."/>
            <person name="Abril J.F."/>
            <person name="Guigo R."/>
            <person name="Kumpf K."/>
            <person name="Tunggal B."/>
            <person name="Cox E.C."/>
            <person name="Quail M.A."/>
            <person name="Platzer M."/>
            <person name="Rosenthal A."/>
            <person name="Noegel A.A."/>
        </authorList>
    </citation>
    <scope>NUCLEOTIDE SEQUENCE [LARGE SCALE GENOMIC DNA]</scope>
    <source>
        <strain>AX4</strain>
    </source>
</reference>
<reference key="2">
    <citation type="journal article" date="2005" name="Nature">
        <title>The genome of the social amoeba Dictyostelium discoideum.</title>
        <authorList>
            <person name="Eichinger L."/>
            <person name="Pachebat J.A."/>
            <person name="Gloeckner G."/>
            <person name="Rajandream M.A."/>
            <person name="Sucgang R."/>
            <person name="Berriman M."/>
            <person name="Song J."/>
            <person name="Olsen R."/>
            <person name="Szafranski K."/>
            <person name="Xu Q."/>
            <person name="Tunggal B."/>
            <person name="Kummerfeld S."/>
            <person name="Madera M."/>
            <person name="Konfortov B.A."/>
            <person name="Rivero F."/>
            <person name="Bankier A.T."/>
            <person name="Lehmann R."/>
            <person name="Hamlin N."/>
            <person name="Davies R."/>
            <person name="Gaudet P."/>
            <person name="Fey P."/>
            <person name="Pilcher K."/>
            <person name="Chen G."/>
            <person name="Saunders D."/>
            <person name="Sodergren E.J."/>
            <person name="Davis P."/>
            <person name="Kerhornou A."/>
            <person name="Nie X."/>
            <person name="Hall N."/>
            <person name="Anjard C."/>
            <person name="Hemphill L."/>
            <person name="Bason N."/>
            <person name="Farbrother P."/>
            <person name="Desany B."/>
            <person name="Just E."/>
            <person name="Morio T."/>
            <person name="Rost R."/>
            <person name="Churcher C.M."/>
            <person name="Cooper J."/>
            <person name="Haydock S."/>
            <person name="van Driessche N."/>
            <person name="Cronin A."/>
            <person name="Goodhead I."/>
            <person name="Muzny D.M."/>
            <person name="Mourier T."/>
            <person name="Pain A."/>
            <person name="Lu M."/>
            <person name="Harper D."/>
            <person name="Lindsay R."/>
            <person name="Hauser H."/>
            <person name="James K.D."/>
            <person name="Quiles M."/>
            <person name="Madan Babu M."/>
            <person name="Saito T."/>
            <person name="Buchrieser C."/>
            <person name="Wardroper A."/>
            <person name="Felder M."/>
            <person name="Thangavelu M."/>
            <person name="Johnson D."/>
            <person name="Knights A."/>
            <person name="Loulseged H."/>
            <person name="Mungall K.L."/>
            <person name="Oliver K."/>
            <person name="Price C."/>
            <person name="Quail M.A."/>
            <person name="Urushihara H."/>
            <person name="Hernandez J."/>
            <person name="Rabbinowitsch E."/>
            <person name="Steffen D."/>
            <person name="Sanders M."/>
            <person name="Ma J."/>
            <person name="Kohara Y."/>
            <person name="Sharp S."/>
            <person name="Simmonds M.N."/>
            <person name="Spiegler S."/>
            <person name="Tivey A."/>
            <person name="Sugano S."/>
            <person name="White B."/>
            <person name="Walker D."/>
            <person name="Woodward J.R."/>
            <person name="Winckler T."/>
            <person name="Tanaka Y."/>
            <person name="Shaulsky G."/>
            <person name="Schleicher M."/>
            <person name="Weinstock G.M."/>
            <person name="Rosenthal A."/>
            <person name="Cox E.C."/>
            <person name="Chisholm R.L."/>
            <person name="Gibbs R.A."/>
            <person name="Loomis W.F."/>
            <person name="Platzer M."/>
            <person name="Kay R.R."/>
            <person name="Williams J.G."/>
            <person name="Dear P.H."/>
            <person name="Noegel A.A."/>
            <person name="Barrell B.G."/>
            <person name="Kuspa A."/>
        </authorList>
    </citation>
    <scope>NUCLEOTIDE SEQUENCE [LARGE SCALE GENOMIC DNA]</scope>
    <source>
        <strain>AX4</strain>
    </source>
</reference>
<keyword id="KW-0227">DNA damage</keyword>
<keyword id="KW-0234">DNA repair</keyword>
<keyword id="KW-0479">Metal-binding</keyword>
<keyword id="KW-0539">Nucleus</keyword>
<keyword id="KW-1185">Reference proteome</keyword>
<keyword id="KW-0677">Repeat</keyword>
<keyword id="KW-0804">Transcription</keyword>
<keyword id="KW-0805">Transcription regulation</keyword>
<keyword id="KW-0862">Zinc</keyword>
<keyword id="KW-0863">Zinc-finger</keyword>
<evidence type="ECO:0000250" key="1"/>
<evidence type="ECO:0000250" key="2">
    <source>
        <dbReference type="UniProtKB" id="Q13888"/>
    </source>
</evidence>
<evidence type="ECO:0000255" key="3">
    <source>
        <dbReference type="PROSITE-ProRule" id="PRU00219"/>
    </source>
</evidence>
<evidence type="ECO:0000256" key="4">
    <source>
        <dbReference type="SAM" id="MobiDB-lite"/>
    </source>
</evidence>
<evidence type="ECO:0000305" key="5"/>
<organism>
    <name type="scientific">Dictyostelium discoideum</name>
    <name type="common">Social amoeba</name>
    <dbReference type="NCBI Taxonomy" id="44689"/>
    <lineage>
        <taxon>Eukaryota</taxon>
        <taxon>Amoebozoa</taxon>
        <taxon>Evosea</taxon>
        <taxon>Eumycetozoa</taxon>
        <taxon>Dictyostelia</taxon>
        <taxon>Dictyosteliales</taxon>
        <taxon>Dictyosteliaceae</taxon>
        <taxon>Dictyostelium</taxon>
    </lineage>
</organism>
<sequence length="461" mass="51959">MSKNIYNNNAQNKRTNRSLYDDEDGPAHVLQTNDEDGTNKYKWENRFEKTWLTIDEDEHGLRPSNQEERNTRNRRLKNKDRDGILSQDQRVRRGMQRHLCLILDLSKTLSNQDLKPSRYQVLLQNVELFIKEFFDQNPISQLSIIITKNSKAEKISELSGNRLRHIQAMKDAIAMEGEPSIQNSLEVALSSLCYVPKYGSREVLFIFSSLTTCDPSSLQKTIQSLKNESIRVSFIHMAAELYICKAIAEQTNGTSKVILNEEHFNESLMLKCQPPPTIGKTEAALVEMGFPQQITSTVPSPCICHEKMKYSGYICPRCGVKSCELPTDCQICNLSLVSSPHLARSYHHLFQIPLFNEVNWKELNKNVTCIGCLSSSEKSILSLFFSCPRCQEIFCLDCDLFIHESLHNCPGCENKLQNTNTNTNGKTNGNEITNGNGNGNGNENENGNGNGNGNGNGNGLH</sequence>
<comment type="function">
    <text evidence="2">Component of the general transcription and DNA repair factor IIH (TFIIH) core complex, which is involved in general and transcription-coupled nucleotide excision repair (NER) of damaged DNA and, when complexed to CAK, in RNA transcription by RNA polymerase II. In NER, TFIIH acts by opening DNA around the lesion to allow the excision of the damaged oligonucleotide and its replacement by a new DNA fragment. In transcription, TFIIH has an essential role in transcription initiation. When the pre-initiation complex (PIC) has been established, TFIIH is required for promoter opening and promoter escape. Phosphorylation of the C-terminal tail (CTD) of the largest subunit of RNA polymerase II by the kinase module CAK controls the initiation of transcription.</text>
</comment>
<comment type="subunit">
    <text evidence="2">Component of the 7-subunit TFIIH core complex composed of XPB/repB, XPD/repD, gtf2h1, gtf2h2, gtf2h3, gtf2h4 and gtf2h5, which is active in NER. The core complex associates with the 3-subunit CDK-activating kinase (CAK) module composed of cycH/cyclin H, cdk7 and mnat1 to form the 10-subunit holoenzyme (holo-TFIIH) active in transcription.</text>
</comment>
<comment type="subcellular location">
    <subcellularLocation>
        <location evidence="1">Nucleus</location>
    </subcellularLocation>
</comment>
<comment type="similarity">
    <text evidence="5">Belongs to the GTF2H2 family.</text>
</comment>